<organism>
    <name type="scientific">Anaplasma phagocytophilum (strain HZ)</name>
    <dbReference type="NCBI Taxonomy" id="212042"/>
    <lineage>
        <taxon>Bacteria</taxon>
        <taxon>Pseudomonadati</taxon>
        <taxon>Pseudomonadota</taxon>
        <taxon>Alphaproteobacteria</taxon>
        <taxon>Rickettsiales</taxon>
        <taxon>Anaplasmataceae</taxon>
        <taxon>Anaplasma</taxon>
        <taxon>phagocytophilum group</taxon>
    </lineage>
</organism>
<accession>Q2GLL2</accession>
<protein>
    <recommendedName>
        <fullName evidence="1">Uridylate kinase</fullName>
        <shortName evidence="1">UK</shortName>
        <ecNumber evidence="1">2.7.4.22</ecNumber>
    </recommendedName>
    <alternativeName>
        <fullName evidence="1">Uridine monophosphate kinase</fullName>
        <shortName evidence="1">UMP kinase</shortName>
        <shortName evidence="1">UMPK</shortName>
    </alternativeName>
</protein>
<dbReference type="EC" id="2.7.4.22" evidence="1"/>
<dbReference type="EMBL" id="CP000235">
    <property type="protein sequence ID" value="ABD44323.1"/>
    <property type="molecule type" value="Genomic_DNA"/>
</dbReference>
<dbReference type="RefSeq" id="WP_011450265.1">
    <property type="nucleotide sequence ID" value="NC_007797.1"/>
</dbReference>
<dbReference type="SMR" id="Q2GLL2"/>
<dbReference type="STRING" id="212042.APH_0111"/>
<dbReference type="PaxDb" id="212042-APH_0111"/>
<dbReference type="EnsemblBacteria" id="ABD44323">
    <property type="protein sequence ID" value="ABD44323"/>
    <property type="gene ID" value="APH_0111"/>
</dbReference>
<dbReference type="GeneID" id="92747645"/>
<dbReference type="KEGG" id="aph:APH_0111"/>
<dbReference type="eggNOG" id="COG0528">
    <property type="taxonomic scope" value="Bacteria"/>
</dbReference>
<dbReference type="HOGENOM" id="CLU_033861_0_0_5"/>
<dbReference type="UniPathway" id="UPA00159">
    <property type="reaction ID" value="UER00275"/>
</dbReference>
<dbReference type="Proteomes" id="UP000001943">
    <property type="component" value="Chromosome"/>
</dbReference>
<dbReference type="GO" id="GO:0005829">
    <property type="term" value="C:cytosol"/>
    <property type="evidence" value="ECO:0007669"/>
    <property type="project" value="TreeGrafter"/>
</dbReference>
<dbReference type="GO" id="GO:0005524">
    <property type="term" value="F:ATP binding"/>
    <property type="evidence" value="ECO:0007669"/>
    <property type="project" value="UniProtKB-KW"/>
</dbReference>
<dbReference type="GO" id="GO:0033862">
    <property type="term" value="F:UMP kinase activity"/>
    <property type="evidence" value="ECO:0007669"/>
    <property type="project" value="UniProtKB-EC"/>
</dbReference>
<dbReference type="GO" id="GO:0044210">
    <property type="term" value="P:'de novo' CTP biosynthetic process"/>
    <property type="evidence" value="ECO:0007669"/>
    <property type="project" value="UniProtKB-UniRule"/>
</dbReference>
<dbReference type="GO" id="GO:0006225">
    <property type="term" value="P:UDP biosynthetic process"/>
    <property type="evidence" value="ECO:0007669"/>
    <property type="project" value="TreeGrafter"/>
</dbReference>
<dbReference type="CDD" id="cd04254">
    <property type="entry name" value="AAK_UMPK-PyrH-Ec"/>
    <property type="match status" value="1"/>
</dbReference>
<dbReference type="FunFam" id="3.40.1160.10:FF:000001">
    <property type="entry name" value="Uridylate kinase"/>
    <property type="match status" value="1"/>
</dbReference>
<dbReference type="Gene3D" id="3.40.1160.10">
    <property type="entry name" value="Acetylglutamate kinase-like"/>
    <property type="match status" value="1"/>
</dbReference>
<dbReference type="HAMAP" id="MF_01220_B">
    <property type="entry name" value="PyrH_B"/>
    <property type="match status" value="1"/>
</dbReference>
<dbReference type="InterPro" id="IPR036393">
    <property type="entry name" value="AceGlu_kinase-like_sf"/>
</dbReference>
<dbReference type="InterPro" id="IPR001048">
    <property type="entry name" value="Asp/Glu/Uridylate_kinase"/>
</dbReference>
<dbReference type="InterPro" id="IPR011817">
    <property type="entry name" value="Uridylate_kinase"/>
</dbReference>
<dbReference type="InterPro" id="IPR015963">
    <property type="entry name" value="Uridylate_kinase_bac"/>
</dbReference>
<dbReference type="NCBIfam" id="TIGR02075">
    <property type="entry name" value="pyrH_bact"/>
    <property type="match status" value="1"/>
</dbReference>
<dbReference type="PANTHER" id="PTHR42833">
    <property type="entry name" value="URIDYLATE KINASE"/>
    <property type="match status" value="1"/>
</dbReference>
<dbReference type="PANTHER" id="PTHR42833:SF4">
    <property type="entry name" value="URIDYLATE KINASE PUMPKIN, CHLOROPLASTIC"/>
    <property type="match status" value="1"/>
</dbReference>
<dbReference type="Pfam" id="PF00696">
    <property type="entry name" value="AA_kinase"/>
    <property type="match status" value="1"/>
</dbReference>
<dbReference type="PIRSF" id="PIRSF005650">
    <property type="entry name" value="Uridylate_kin"/>
    <property type="match status" value="1"/>
</dbReference>
<dbReference type="SUPFAM" id="SSF53633">
    <property type="entry name" value="Carbamate kinase-like"/>
    <property type="match status" value="1"/>
</dbReference>
<proteinExistence type="inferred from homology"/>
<sequence length="244" mass="26364">MSIDCNVVENVRYSRVLLKVSGEALAGERGFGFDQDVIGKLSCDLKKVRESGVELCIVVGGGNIFRGSSTSFGFERASNDYVGMLATMINALALQNSLEDMGIASRVLSAIPMTAVCETYIRRRAIRHLEKGRVVICAAGIGSPFFTTDTAAVLRSIEMRCDAIFKGTQVDGVYSSDPKKDCSATRYDKISYHDLLASDLKIMDAAAVSLARENSIPIIVFDLGKENAFSEVMKGRGTFTTISG</sequence>
<evidence type="ECO:0000255" key="1">
    <source>
        <dbReference type="HAMAP-Rule" id="MF_01220"/>
    </source>
</evidence>
<feature type="chain" id="PRO_0000323784" description="Uridylate kinase">
    <location>
        <begin position="1"/>
        <end position="244"/>
    </location>
</feature>
<feature type="region of interest" description="Involved in allosteric activation by GTP" evidence="1">
    <location>
        <begin position="27"/>
        <end position="32"/>
    </location>
</feature>
<feature type="binding site" evidence="1">
    <location>
        <begin position="19"/>
        <end position="22"/>
    </location>
    <ligand>
        <name>ATP</name>
        <dbReference type="ChEBI" id="CHEBI:30616"/>
    </ligand>
</feature>
<feature type="binding site" evidence="1">
    <location>
        <position position="61"/>
    </location>
    <ligand>
        <name>UMP</name>
        <dbReference type="ChEBI" id="CHEBI:57865"/>
    </ligand>
</feature>
<feature type="binding site" evidence="1">
    <location>
        <position position="62"/>
    </location>
    <ligand>
        <name>ATP</name>
        <dbReference type="ChEBI" id="CHEBI:30616"/>
    </ligand>
</feature>
<feature type="binding site" evidence="1">
    <location>
        <position position="66"/>
    </location>
    <ligand>
        <name>ATP</name>
        <dbReference type="ChEBI" id="CHEBI:30616"/>
    </ligand>
</feature>
<feature type="binding site" evidence="1">
    <location>
        <position position="80"/>
    </location>
    <ligand>
        <name>UMP</name>
        <dbReference type="ChEBI" id="CHEBI:57865"/>
    </ligand>
</feature>
<feature type="binding site" evidence="1">
    <location>
        <begin position="141"/>
        <end position="148"/>
    </location>
    <ligand>
        <name>UMP</name>
        <dbReference type="ChEBI" id="CHEBI:57865"/>
    </ligand>
</feature>
<feature type="binding site" evidence="1">
    <location>
        <position position="168"/>
    </location>
    <ligand>
        <name>ATP</name>
        <dbReference type="ChEBI" id="CHEBI:30616"/>
    </ligand>
</feature>
<feature type="binding site" evidence="1">
    <location>
        <position position="169"/>
    </location>
    <ligand>
        <name>ATP</name>
        <dbReference type="ChEBI" id="CHEBI:30616"/>
    </ligand>
</feature>
<feature type="binding site" evidence="1">
    <location>
        <position position="174"/>
    </location>
    <ligand>
        <name>ATP</name>
        <dbReference type="ChEBI" id="CHEBI:30616"/>
    </ligand>
</feature>
<feature type="binding site" evidence="1">
    <location>
        <position position="177"/>
    </location>
    <ligand>
        <name>ATP</name>
        <dbReference type="ChEBI" id="CHEBI:30616"/>
    </ligand>
</feature>
<gene>
    <name evidence="1" type="primary">pyrH</name>
    <name type="ordered locus">APH_0111</name>
</gene>
<comment type="function">
    <text evidence="1">Catalyzes the reversible phosphorylation of UMP to UDP.</text>
</comment>
<comment type="catalytic activity">
    <reaction evidence="1">
        <text>UMP + ATP = UDP + ADP</text>
        <dbReference type="Rhea" id="RHEA:24400"/>
        <dbReference type="ChEBI" id="CHEBI:30616"/>
        <dbReference type="ChEBI" id="CHEBI:57865"/>
        <dbReference type="ChEBI" id="CHEBI:58223"/>
        <dbReference type="ChEBI" id="CHEBI:456216"/>
        <dbReference type="EC" id="2.7.4.22"/>
    </reaction>
</comment>
<comment type="activity regulation">
    <text evidence="1">Allosterically activated by GTP. Inhibited by UTP.</text>
</comment>
<comment type="pathway">
    <text evidence="1">Pyrimidine metabolism; CTP biosynthesis via de novo pathway; UDP from UMP (UMPK route): step 1/1.</text>
</comment>
<comment type="subunit">
    <text evidence="1">Homohexamer.</text>
</comment>
<comment type="subcellular location">
    <subcellularLocation>
        <location evidence="1">Cytoplasm</location>
    </subcellularLocation>
</comment>
<comment type="similarity">
    <text evidence="1">Belongs to the UMP kinase family.</text>
</comment>
<reference key="1">
    <citation type="journal article" date="2006" name="PLoS Genet.">
        <title>Comparative genomics of emerging human ehrlichiosis agents.</title>
        <authorList>
            <person name="Dunning Hotopp J.C."/>
            <person name="Lin M."/>
            <person name="Madupu R."/>
            <person name="Crabtree J."/>
            <person name="Angiuoli S.V."/>
            <person name="Eisen J.A."/>
            <person name="Seshadri R."/>
            <person name="Ren Q."/>
            <person name="Wu M."/>
            <person name="Utterback T.R."/>
            <person name="Smith S."/>
            <person name="Lewis M."/>
            <person name="Khouri H."/>
            <person name="Zhang C."/>
            <person name="Niu H."/>
            <person name="Lin Q."/>
            <person name="Ohashi N."/>
            <person name="Zhi N."/>
            <person name="Nelson W.C."/>
            <person name="Brinkac L.M."/>
            <person name="Dodson R.J."/>
            <person name="Rosovitz M.J."/>
            <person name="Sundaram J.P."/>
            <person name="Daugherty S.C."/>
            <person name="Davidsen T."/>
            <person name="Durkin A.S."/>
            <person name="Gwinn M.L."/>
            <person name="Haft D.H."/>
            <person name="Selengut J.D."/>
            <person name="Sullivan S.A."/>
            <person name="Zafar N."/>
            <person name="Zhou L."/>
            <person name="Benahmed F."/>
            <person name="Forberger H."/>
            <person name="Halpin R."/>
            <person name="Mulligan S."/>
            <person name="Robinson J."/>
            <person name="White O."/>
            <person name="Rikihisa Y."/>
            <person name="Tettelin H."/>
        </authorList>
    </citation>
    <scope>NUCLEOTIDE SEQUENCE [LARGE SCALE GENOMIC DNA]</scope>
    <source>
        <strain>HZ</strain>
    </source>
</reference>
<keyword id="KW-0021">Allosteric enzyme</keyword>
<keyword id="KW-0067">ATP-binding</keyword>
<keyword id="KW-0963">Cytoplasm</keyword>
<keyword id="KW-0418">Kinase</keyword>
<keyword id="KW-0547">Nucleotide-binding</keyword>
<keyword id="KW-0665">Pyrimidine biosynthesis</keyword>
<keyword id="KW-0808">Transferase</keyword>
<name>PYRH_ANAPZ</name>